<evidence type="ECO:0000250" key="1">
    <source>
        <dbReference type="UniProtKB" id="Q8K3Z0"/>
    </source>
</evidence>
<evidence type="ECO:0000250" key="2">
    <source>
        <dbReference type="UniProtKB" id="Q9HC29"/>
    </source>
</evidence>
<evidence type="ECO:0000255" key="3"/>
<evidence type="ECO:0000255" key="4">
    <source>
        <dbReference type="PROSITE-ProRule" id="PRU00046"/>
    </source>
</evidence>
<evidence type="ECO:0000255" key="5">
    <source>
        <dbReference type="PROSITE-ProRule" id="PRU00136"/>
    </source>
</evidence>
<evidence type="ECO:0000269" key="6">
    <source>
    </source>
</evidence>
<evidence type="ECO:0000303" key="7">
    <source>
    </source>
</evidence>
<evidence type="ECO:0000305" key="8"/>
<evidence type="ECO:0000312" key="9">
    <source>
        <dbReference type="EMBL" id="AWB51108.1"/>
    </source>
</evidence>
<evidence type="ECO:0007744" key="10">
    <source>
        <dbReference type="PDB" id="5IRL"/>
    </source>
</evidence>
<evidence type="ECO:0007744" key="11">
    <source>
        <dbReference type="PDB" id="5IRM"/>
    </source>
</evidence>
<evidence type="ECO:0007744" key="12">
    <source>
        <dbReference type="PDB" id="5IRN"/>
    </source>
</evidence>
<evidence type="ECO:0007829" key="13">
    <source>
        <dbReference type="PDB" id="5IRL"/>
    </source>
</evidence>
<evidence type="ECO:0007829" key="14">
    <source>
        <dbReference type="PDB" id="5IRM"/>
    </source>
</evidence>
<evidence type="ECO:0007829" key="15">
    <source>
        <dbReference type="PDB" id="5IRN"/>
    </source>
</evidence>
<reference evidence="9" key="1">
    <citation type="submission" date="2017-05" db="EMBL/GenBank/DDBJ databases">
        <authorList>
            <person name="Song R."/>
            <person name="Chenine A.L."/>
            <person name="Ruprecht R.M."/>
        </authorList>
    </citation>
    <scope>NUCLEOTIDE SEQUENCE [MRNA]</scope>
</reference>
<reference key="2">
    <citation type="journal article" date="2011" name="Nature">
        <title>A high-resolution map of human evolutionary constraint using 29 mammals.</title>
        <authorList>
            <person name="Lindblad-Toh K."/>
            <person name="Garber M."/>
            <person name="Zuk O."/>
            <person name="Lin M.F."/>
            <person name="Parker B.J."/>
            <person name="Washietl S."/>
            <person name="Kheradpour P."/>
            <person name="Ernst J."/>
            <person name="Jordan G."/>
            <person name="Mauceli E."/>
            <person name="Ward L.D."/>
            <person name="Lowe C.B."/>
            <person name="Holloway A.K."/>
            <person name="Clamp M."/>
            <person name="Gnerre S."/>
            <person name="Alfoldi J."/>
            <person name="Beal K."/>
            <person name="Chang J."/>
            <person name="Clawson H."/>
            <person name="Cuff J."/>
            <person name="Di Palma F."/>
            <person name="Fitzgerald S."/>
            <person name="Flicek P."/>
            <person name="Guttman M."/>
            <person name="Hubisz M.J."/>
            <person name="Jaffe D.B."/>
            <person name="Jungreis I."/>
            <person name="Kent W.J."/>
            <person name="Kostka D."/>
            <person name="Lara M."/>
            <person name="Martins A.L."/>
            <person name="Massingham T."/>
            <person name="Moltke I."/>
            <person name="Raney B.J."/>
            <person name="Rasmussen M.D."/>
            <person name="Robinson J."/>
            <person name="Stark A."/>
            <person name="Vilella A.J."/>
            <person name="Wen J."/>
            <person name="Xie X."/>
            <person name="Zody M.C."/>
            <person name="Baldwin J."/>
            <person name="Bloom T."/>
            <person name="Chin C.W."/>
            <person name="Heiman D."/>
            <person name="Nicol R."/>
            <person name="Nusbaum C."/>
            <person name="Young S."/>
            <person name="Wilkinson J."/>
            <person name="Worley K.C."/>
            <person name="Kovar C.L."/>
            <person name="Muzny D.M."/>
            <person name="Gibbs R.A."/>
            <person name="Cree A."/>
            <person name="Dihn H.H."/>
            <person name="Fowler G."/>
            <person name="Jhangiani S."/>
            <person name="Joshi V."/>
            <person name="Lee S."/>
            <person name="Lewis L.R."/>
            <person name="Nazareth L.V."/>
            <person name="Okwuonu G."/>
            <person name="Santibanez J."/>
            <person name="Warren W.C."/>
            <person name="Mardis E.R."/>
            <person name="Weinstock G.M."/>
            <person name="Wilson R.K."/>
            <person name="Delehaunty K."/>
            <person name="Dooling D."/>
            <person name="Fronik C."/>
            <person name="Fulton L."/>
            <person name="Fulton B."/>
            <person name="Graves T."/>
            <person name="Minx P."/>
            <person name="Sodergren E."/>
            <person name="Birney E."/>
            <person name="Margulies E.H."/>
            <person name="Herrero J."/>
            <person name="Green E.D."/>
            <person name="Haussler D."/>
            <person name="Siepel A."/>
            <person name="Goldman N."/>
            <person name="Pollard K.S."/>
            <person name="Pedersen J.S."/>
            <person name="Lander E.S."/>
            <person name="Kellis M."/>
        </authorList>
    </citation>
    <scope>NUCLEOTIDE SEQUENCE [LARGE SCALE GENOMIC DNA]</scope>
    <source>
        <strain>Thorbecke</strain>
    </source>
</reference>
<reference evidence="10 11" key="3">
    <citation type="journal article" date="2016" name="Nat. Commun.">
        <title>Crystal structure of NOD2 and its implications in human disease.</title>
        <authorList>
            <person name="Maekawa S."/>
            <person name="Ohto U."/>
            <person name="Shibata T."/>
            <person name="Miyake K."/>
            <person name="Shimizu T."/>
        </authorList>
    </citation>
    <scope>X-RAY CRYSTALLOGRAPHY (2.34 ANGSTROMS) OF 194-1020 IN COMPLEX WITH ADP</scope>
    <scope>ACTIVITY REGULATION</scope>
</reference>
<protein>
    <recommendedName>
        <fullName evidence="8">Nucleotide-binding oligomerization domain-containing protein 2</fullName>
        <shortName evidence="7">OcNOD2</shortName>
    </recommendedName>
</protein>
<sequence length="1013" mass="112320">MCSQEAFQAQRSQLVGLLVSGSLEGFESILDLLLSWEVLSWEDYEGLRLVGQPLSHLARRLLDTVWNKGTWGCQKLIAAVQEAQDSSQCPELHGCWDPHSLHPAQDLQSHRPAIVRRLYSHVEGVLDLALEQGFISQYECDEIRLPIFTSSQRARRLLDLATVKANGLAAFLLQHVQKLPVSLSLPFEAAACKKYMSKLRTIVAAQSRFLSTYDGAENLCLEDIYTENTLEVRTEVGMAGPLHKSPAALGLEELFSPNGHLNEDADTVLVVGEAGSGKSTLLQQVHLLWATGQDFQEFLFVFPFSCRQLQCVARPLSVMTLLFEHCCWPDVGQQDVFQFLLDHPDRILLTFDGFDEFKFKFTDHERHCSPTDPTSVQTLLFNLLQGNLLKNARKVLTSRPDAVSAFLRKYVRTEFNLKGFSEEGIELYLRKCHREPGVADRLIHLLQTTSALHGLCHLPVFSWMVSKCHQELLLQDGGSPKTTTDMYLLILQHFLRHASLPDSASQGLGPSLLQGRLPTLLRLGQLALWGLGMCCYVFSAQQLQAAQVDPDDISLGFLVQAQGVVPGSTAPLEFLHITFQCFLAAFYLVLSTDVPTASLRYLFNCRRPGSSPLSRLLPRLCVQGSEHKESTVAALLQKTEPHNLQITAAFLAGLLSREHRDLLAACQASERSLLRRRACARWCLARSLHKHFRSIPPAVPGEAKSMHAMPGFLWLIRSLYEMQEERLAQEAVRGLNVEHLKLTFCGVGPAECAALAFVLRHLRRPVALQLDHNSVGDIGVEQLLPCLGACKALYLRDNNISDRGICKLIEHALHCEQLQKLALFNNKLTDGCAHSVAQLLACKQNFLALRLGNNHITAEGAQVLAEGLRDNSSLQFLGFWGNKVGDKGAQALAEALSDHQSLKWLSLVGNNIGSVGAQALASMLEKNVALEELCLEENHLQDAGVCSLAEGLKRNSSLKVLKLSNNCITFVGAEALLQALASNDTILEVWLRGNPFSPEEMEALSHRDSRLLL</sequence>
<proteinExistence type="evidence at protein level"/>
<comment type="function">
    <text evidence="1 2">Pattern recognition receptor (PRR) that detects bacterial peptidoglycan fragments and other danger signals and plays an important role in gastrointestinal immunity. Specifically activated by muramyl dipeptide (MDP), a fragment of bacterial peptidoglycan found in every bacterial peptidoglycan type. NOD2 specifically recognizes and binds 6-O-phospho-MDP, the phosphorylated form of MDP, which is generated by NAGK. 6-O-phospho-MDP-binding triggers oligomerization that facilitates the binding and subsequent activation of the proximal adapter receptor-interacting RIPK2. Following recruitment, RIPK2 undergoes 'Met-1'- (linear) and 'Lys-63'-linked polyubiquitination by E3 ubiquitin-protein ligases XIAP, BIRC2, BIRC3 and the LUBAC complex, becoming a scaffolding protein for downstream effectors, triggering activation of the NF-kappa-B and MAP kinases signaling. This in turn leads to the transcriptional activation of hundreds of genes involved in immune response (By similarity). Its ability to detect bacterial MDP plays a central role in maintaining the equilibrium between intestinal microbiota and host immune responses to control inflammation. An imbalance in this relationship results in dysbiosis, whereby pathogenic bacteria prevail on commensals, causing damage in the intestinal epithelial barrier as well as allowing bacterial invasion and inflammation. Acts as a regulator of appetite by sensing MDP in a subset of brain neurons: microbiota-derived MDP reach the brain, where they bind and activate NOD2 in inhibitory hypothalamic neurons, decreasing neuronal activity, thereby regulating satiety and body temperature. NOD2-dependent MDP-sensing of bacterial cell walls in the intestinal epithelial compartment contributes to sustained postnatal growth upon undernutrition (By similarity). Also plays a role in antiviral response by acting as a sensor of single-stranded RNA (ssRNA) from viruses: upon ssRNA-binding, interacts with MAVS, leading to activation of interferon regulatory factor-3/IRF3 and expression of type I interferon. Also acts as a regulator of autophagy in dendritic cells via its interaction with ATG16L1, possibly by recruiting ATG16L1 at the site of bacterial entry (By similarity). NOD2 activation in the small intestine crypt also contributes to intestinal stem cells survival and function: acts by promoting mitophagy via its association with ATG16L1. In addition to its main role in innate immunity, also regulates the adaptive immune system by acting as regulator of helper T-cell and regulatory T-cells (Tregs) (By similarity). Besides recognizing pathogens, also involved in the endoplasmic reticulum stress response: acts by sensing and binding to the cytosolic metabolite sphingosine-1-phosphate generated in response to endoplasmic reticulum stress, initiating an inflammation process that leads to activation of the NF-kappa-B and MAP kinases signaling. May also be involved in NLRP1 activation following activation by MDP, leading to CASP1 activation and IL1B release in macrophages (By similarity).</text>
</comment>
<comment type="activity regulation">
    <text evidence="6">ADP-binding promotes an inactive closed conformation.</text>
</comment>
<comment type="subunit">
    <text evidence="2">Homooligomer: homooligomerizes following muramyl dipeptide (MDP)-binding, promoting RIPK2 recruitment. Interacts (via CARD domain) with RIPK2 (via CARD domain). Following RIPK2 recruitment, RIPK2 homooligomerizes via its CARD domain and forms long filaments named RIPosomes. Interacts (via CARD domain) with ubiquitin; inhibiting interaction with RIPK2. Component of a signaling complex consisting of ARHGEF2, NOD2 and RIPK2. Interacts with ANKRD17 (via N-terminus). Interacts with HSPA1A; the interaction enhances NOD2 stability. Interacts (via both CARD domains) with HSP90; the interaction enhances NOD2 stability. Interacts (via CARD domain) with SOCS3; the interaction promotes NOD2 degradation. Interacts (via CARD domain) with ERBIN; the interaction inhibits activation of NOD2. Interacts with MAPKBP1; the interaction is enhanced in the presence of muramyl dipeptide (MDP) and inhibits NOD2 homooligomerization and activation. Interacts with INAVA; the interaction takes place upon Pattern recognition receptor (PRR) stimulation. Interacts (via NACHT domain) with CARD9. Interacts (via CARD domain) with CASP1; this interaction leads to IL1B processing. Also interacts with CASP4. Interacts with NLRP1; this interaction is enhanced in the presence of muramyl dipeptide (MDP) and leads to increased IL1B release. Interacts with NLRP12; this interaction promotes degradation of NOD2 through the ubiquitin-proteasome pathway. Interacts with ANKHD1, C10orf67, CHMP5, DOCK7, ENTR1, KRT15, LDOC1, PPP1R12C, PPP2R3B, TRIM41 and VIM. Interacts with MAVS; interaction takes place following single-stranded RNA (ssRNA)-binding. Interacts with ATG16L1. Interacts with IRGM; promoting IRGM 'Lys-63'-linked polyubiquitination, which is required for interactions with the core autophagy factors.</text>
</comment>
<comment type="subcellular location">
    <subcellularLocation>
        <location evidence="2">Cell membrane</location>
        <topology evidence="2">Lipid-anchor</topology>
    </subcellularLocation>
    <subcellularLocation>
        <location evidence="2">Basolateral cell membrane</location>
    </subcellularLocation>
    <subcellularLocation>
        <location evidence="2">Cytoplasm</location>
    </subcellularLocation>
    <subcellularLocation>
        <location evidence="2">Mitochondrion</location>
    </subcellularLocation>
    <text evidence="2">Palmitoylation promotes localization to the cell membrane, where it detects bacterial invasion at the point of entry.</text>
</comment>
<comment type="domain">
    <text evidence="2">The ATG16L1-binding motif mediates interaction with ATG16L1.</text>
</comment>
<comment type="domain">
    <text evidence="2">Intramolecular interactions between the N-terminal moiety and the leucine-rich repeats (LRR) may be important for autoinhibition in the absence of activating signal.</text>
</comment>
<comment type="domain">
    <text evidence="2">The LRR repeats recognize and bind muramyl dipeptide (MDP).</text>
</comment>
<comment type="domain">
    <text evidence="2">The NACHT domain recognizes and binds sphingosine-1-phosphate in response to endoplasmic reticulum stress.</text>
</comment>
<comment type="PTM">
    <text evidence="2">Palmitoylated by ZDHHC5; palmitoylation is required for proper recruitment to the bacterial entry site and hence for proper signaling upon cognate peptidoglycan detection. Palmitoylation promotes localization to the cell membrane. Palmitoylation protects from SQSTM1/p62-dependent autophagic degradation.</text>
</comment>
<comment type="PTM">
    <text evidence="2">Polyubiquitinated by TRIM27, leading to proteasome-mediated degradation. Polyubiquitinated and degraded following muramyl dipeptide (MDP) stimulation, conferring MDP tolerance and preventing septic shock.</text>
</comment>
<comment type="PTM">
    <text evidence="2">Degraded via selective autophagy following interaction with IRGM. IRGM promotes NOD2-RIPK2 RIPosome recruitment to autophagosome membranes, promoting their SQSTM1/p62-dependent autophagic degradation.</text>
</comment>
<comment type="PTM">
    <text evidence="2">O-glycosylated by OGT, O-GlcNAcylation increases protein stability.</text>
</comment>
<comment type="similarity">
    <text evidence="8">Belongs to the NOD1-NOD2 family.</text>
</comment>
<accession>G1T469</accession>
<accession>A0A2S0UTH0</accession>
<dbReference type="EMBL" id="MF125932">
    <property type="protein sequence ID" value="AWB51108.1"/>
    <property type="molecule type" value="mRNA"/>
</dbReference>
<dbReference type="RefSeq" id="XP_008273264.1">
    <property type="nucleotide sequence ID" value="XM_008275042.4"/>
</dbReference>
<dbReference type="PDB" id="5IRL">
    <property type="method" value="X-ray"/>
    <property type="resolution" value="3.09 A"/>
    <property type="chains" value="A=187-1013"/>
</dbReference>
<dbReference type="PDB" id="5IRM">
    <property type="method" value="X-ray"/>
    <property type="resolution" value="3.31 A"/>
    <property type="chains" value="A/C=187-1013"/>
</dbReference>
<dbReference type="PDB" id="5IRN">
    <property type="method" value="X-ray"/>
    <property type="resolution" value="2.34 A"/>
    <property type="chains" value="A=187-1013"/>
</dbReference>
<dbReference type="PDBsum" id="5IRL"/>
<dbReference type="PDBsum" id="5IRM"/>
<dbReference type="PDBsum" id="5IRN"/>
<dbReference type="SMR" id="G1T469"/>
<dbReference type="FunCoup" id="G1T469">
    <property type="interactions" value="77"/>
</dbReference>
<dbReference type="STRING" id="9986.ENSOCUP00000011052"/>
<dbReference type="PaxDb" id="9986-ENSOCUP00000011052"/>
<dbReference type="Ensembl" id="ENSOCUT00000012844.3">
    <property type="protein sequence ID" value="ENSOCUP00000011052.3"/>
    <property type="gene ID" value="ENSOCUG00000012840.3"/>
</dbReference>
<dbReference type="GeneID" id="100356594"/>
<dbReference type="KEGG" id="ocu:100356594"/>
<dbReference type="CTD" id="64127"/>
<dbReference type="eggNOG" id="KOG4308">
    <property type="taxonomic scope" value="Eukaryota"/>
</dbReference>
<dbReference type="GeneTree" id="ENSGT00940000160934"/>
<dbReference type="HOGENOM" id="CLU_011291_0_0_1"/>
<dbReference type="InParanoid" id="G1T469"/>
<dbReference type="OrthoDB" id="120976at2759"/>
<dbReference type="TreeFam" id="TF352118"/>
<dbReference type="EvolutionaryTrace" id="G1T469"/>
<dbReference type="Proteomes" id="UP000001811">
    <property type="component" value="Unplaced"/>
</dbReference>
<dbReference type="Bgee" id="ENSOCUG00000012840">
    <property type="expression patterns" value="Expressed in ovary and 16 other cell types or tissues"/>
</dbReference>
<dbReference type="GO" id="GO:0016323">
    <property type="term" value="C:basolateral plasma membrane"/>
    <property type="evidence" value="ECO:0007669"/>
    <property type="project" value="UniProtKB-SubCell"/>
</dbReference>
<dbReference type="GO" id="GO:0009986">
    <property type="term" value="C:cell surface"/>
    <property type="evidence" value="ECO:0007669"/>
    <property type="project" value="Ensembl"/>
</dbReference>
<dbReference type="GO" id="GO:0005856">
    <property type="term" value="C:cytoskeleton"/>
    <property type="evidence" value="ECO:0007669"/>
    <property type="project" value="Ensembl"/>
</dbReference>
<dbReference type="GO" id="GO:0005829">
    <property type="term" value="C:cytosol"/>
    <property type="evidence" value="ECO:0007669"/>
    <property type="project" value="Ensembl"/>
</dbReference>
<dbReference type="GO" id="GO:0019897">
    <property type="term" value="C:extrinsic component of plasma membrane"/>
    <property type="evidence" value="ECO:0000250"/>
    <property type="project" value="UniProtKB"/>
</dbReference>
<dbReference type="GO" id="GO:0005794">
    <property type="term" value="C:Golgi apparatus"/>
    <property type="evidence" value="ECO:0007669"/>
    <property type="project" value="Ensembl"/>
</dbReference>
<dbReference type="GO" id="GO:0005739">
    <property type="term" value="C:mitochondrion"/>
    <property type="evidence" value="ECO:0007669"/>
    <property type="project" value="UniProtKB-SubCell"/>
</dbReference>
<dbReference type="GO" id="GO:0045335">
    <property type="term" value="C:phagocytic vesicle"/>
    <property type="evidence" value="ECO:0007669"/>
    <property type="project" value="Ensembl"/>
</dbReference>
<dbReference type="GO" id="GO:0032991">
    <property type="term" value="C:protein-containing complex"/>
    <property type="evidence" value="ECO:0007669"/>
    <property type="project" value="Ensembl"/>
</dbReference>
<dbReference type="GO" id="GO:0003779">
    <property type="term" value="F:actin binding"/>
    <property type="evidence" value="ECO:0007669"/>
    <property type="project" value="Ensembl"/>
</dbReference>
<dbReference type="GO" id="GO:0043531">
    <property type="term" value="F:ADP binding"/>
    <property type="evidence" value="ECO:0000314"/>
    <property type="project" value="UniProtKB"/>
</dbReference>
<dbReference type="GO" id="GO:0005524">
    <property type="term" value="F:ATP binding"/>
    <property type="evidence" value="ECO:0007669"/>
    <property type="project" value="UniProtKB-KW"/>
</dbReference>
<dbReference type="GO" id="GO:0050700">
    <property type="term" value="F:CARD domain binding"/>
    <property type="evidence" value="ECO:0007669"/>
    <property type="project" value="Ensembl"/>
</dbReference>
<dbReference type="GO" id="GO:0030544">
    <property type="term" value="F:Hsp70 protein binding"/>
    <property type="evidence" value="ECO:0007669"/>
    <property type="project" value="Ensembl"/>
</dbReference>
<dbReference type="GO" id="GO:0051879">
    <property type="term" value="F:Hsp90 protein binding"/>
    <property type="evidence" value="ECO:0007669"/>
    <property type="project" value="Ensembl"/>
</dbReference>
<dbReference type="GO" id="GO:0032500">
    <property type="term" value="F:muramyl dipeptide binding"/>
    <property type="evidence" value="ECO:0000250"/>
    <property type="project" value="UniProtKB"/>
</dbReference>
<dbReference type="GO" id="GO:0038187">
    <property type="term" value="F:pattern recognition receptor activity"/>
    <property type="evidence" value="ECO:0000250"/>
    <property type="project" value="UniProtKB"/>
</dbReference>
<dbReference type="GO" id="GO:0042834">
    <property type="term" value="F:peptidoglycan binding"/>
    <property type="evidence" value="ECO:0007669"/>
    <property type="project" value="Ensembl"/>
</dbReference>
<dbReference type="GO" id="GO:0019901">
    <property type="term" value="F:protein kinase binding"/>
    <property type="evidence" value="ECO:0007669"/>
    <property type="project" value="Ensembl"/>
</dbReference>
<dbReference type="GO" id="GO:0044877">
    <property type="term" value="F:protein-containing complex binding"/>
    <property type="evidence" value="ECO:0007669"/>
    <property type="project" value="Ensembl"/>
</dbReference>
<dbReference type="GO" id="GO:0043130">
    <property type="term" value="F:ubiquitin binding"/>
    <property type="evidence" value="ECO:0000250"/>
    <property type="project" value="UniProtKB"/>
</dbReference>
<dbReference type="GO" id="GO:0002250">
    <property type="term" value="P:adaptive immune response"/>
    <property type="evidence" value="ECO:0007669"/>
    <property type="project" value="UniProtKB-KW"/>
</dbReference>
<dbReference type="GO" id="GO:0140367">
    <property type="term" value="P:antibacterial innate immune response"/>
    <property type="evidence" value="ECO:0007669"/>
    <property type="project" value="Ensembl"/>
</dbReference>
<dbReference type="GO" id="GO:0006914">
    <property type="term" value="P:autophagy"/>
    <property type="evidence" value="ECO:0007669"/>
    <property type="project" value="UniProtKB-KW"/>
</dbReference>
<dbReference type="GO" id="GO:0007249">
    <property type="term" value="P:canonical NF-kappaB signal transduction"/>
    <property type="evidence" value="ECO:0007669"/>
    <property type="project" value="Ensembl"/>
</dbReference>
<dbReference type="GO" id="GO:0071222">
    <property type="term" value="P:cellular response to lipopolysaccharide"/>
    <property type="evidence" value="ECO:0007669"/>
    <property type="project" value="Ensembl"/>
</dbReference>
<dbReference type="GO" id="GO:0071225">
    <property type="term" value="P:cellular response to muramyl dipeptide"/>
    <property type="evidence" value="ECO:0007669"/>
    <property type="project" value="Ensembl"/>
</dbReference>
<dbReference type="GO" id="GO:0042742">
    <property type="term" value="P:defense response to bacterium"/>
    <property type="evidence" value="ECO:0000250"/>
    <property type="project" value="UniProtKB"/>
</dbReference>
<dbReference type="GO" id="GO:0016045">
    <property type="term" value="P:detection of bacterium"/>
    <property type="evidence" value="ECO:0007669"/>
    <property type="project" value="Ensembl"/>
</dbReference>
<dbReference type="GO" id="GO:0032498">
    <property type="term" value="P:detection of muramyl dipeptide"/>
    <property type="evidence" value="ECO:0007669"/>
    <property type="project" value="Ensembl"/>
</dbReference>
<dbReference type="GO" id="GO:0048874">
    <property type="term" value="P:host-mediated regulation of intestinal microbiota composition"/>
    <property type="evidence" value="ECO:0000250"/>
    <property type="project" value="UniProtKB"/>
</dbReference>
<dbReference type="GO" id="GO:0036335">
    <property type="term" value="P:intestinal stem cell homeostasis"/>
    <property type="evidence" value="ECO:0000250"/>
    <property type="project" value="UniProtKB"/>
</dbReference>
<dbReference type="GO" id="GO:0030277">
    <property type="term" value="P:maintenance of gastrointestinal epithelium"/>
    <property type="evidence" value="ECO:0007669"/>
    <property type="project" value="Ensembl"/>
</dbReference>
<dbReference type="GO" id="GO:0070431">
    <property type="term" value="P:nucleotide-binding oligomerization domain containing 2 signaling pathway"/>
    <property type="evidence" value="ECO:0000250"/>
    <property type="project" value="UniProtKB"/>
</dbReference>
<dbReference type="GO" id="GO:0050871">
    <property type="term" value="P:positive regulation of B cell activation"/>
    <property type="evidence" value="ECO:0007669"/>
    <property type="project" value="Ensembl"/>
</dbReference>
<dbReference type="GO" id="GO:0043123">
    <property type="term" value="P:positive regulation of canonical NF-kappaB signal transduction"/>
    <property type="evidence" value="ECO:0000250"/>
    <property type="project" value="UniProtKB"/>
</dbReference>
<dbReference type="GO" id="GO:0002720">
    <property type="term" value="P:positive regulation of cytokine production involved in immune response"/>
    <property type="evidence" value="ECO:0007669"/>
    <property type="project" value="Ensembl"/>
</dbReference>
<dbReference type="GO" id="GO:1900017">
    <property type="term" value="P:positive regulation of cytokine production involved in inflammatory response"/>
    <property type="evidence" value="ECO:0007669"/>
    <property type="project" value="Ensembl"/>
</dbReference>
<dbReference type="GO" id="GO:0032731">
    <property type="term" value="P:positive regulation of interleukin-1 beta production"/>
    <property type="evidence" value="ECO:0007669"/>
    <property type="project" value="Ensembl"/>
</dbReference>
<dbReference type="GO" id="GO:0032740">
    <property type="term" value="P:positive regulation of interleukin-17 production"/>
    <property type="evidence" value="ECO:0007669"/>
    <property type="project" value="Ensembl"/>
</dbReference>
<dbReference type="GO" id="GO:0032755">
    <property type="term" value="P:positive regulation of interleukin-6 production"/>
    <property type="evidence" value="ECO:0007669"/>
    <property type="project" value="Ensembl"/>
</dbReference>
<dbReference type="GO" id="GO:0032757">
    <property type="term" value="P:positive regulation of interleukin-8 production"/>
    <property type="evidence" value="ECO:0007669"/>
    <property type="project" value="Ensembl"/>
</dbReference>
<dbReference type="GO" id="GO:0046330">
    <property type="term" value="P:positive regulation of JNK cascade"/>
    <property type="evidence" value="ECO:0007669"/>
    <property type="project" value="Ensembl"/>
</dbReference>
<dbReference type="GO" id="GO:1901526">
    <property type="term" value="P:positive regulation of mitophagy"/>
    <property type="evidence" value="ECO:0000250"/>
    <property type="project" value="UniProtKB"/>
</dbReference>
<dbReference type="GO" id="GO:1901224">
    <property type="term" value="P:positive regulation of non-canonical NF-kappaB signal transduction"/>
    <property type="evidence" value="ECO:0007669"/>
    <property type="project" value="Ensembl"/>
</dbReference>
<dbReference type="GO" id="GO:1902523">
    <property type="term" value="P:positive regulation of protein K63-linked ubiquitination"/>
    <property type="evidence" value="ECO:0007669"/>
    <property type="project" value="Ensembl"/>
</dbReference>
<dbReference type="GO" id="GO:0032874">
    <property type="term" value="P:positive regulation of stress-activated MAPK cascade"/>
    <property type="evidence" value="ECO:0007669"/>
    <property type="project" value="Ensembl"/>
</dbReference>
<dbReference type="GO" id="GO:0045944">
    <property type="term" value="P:positive regulation of transcription by RNA polymerase II"/>
    <property type="evidence" value="ECO:0007669"/>
    <property type="project" value="Ensembl"/>
</dbReference>
<dbReference type="GO" id="GO:0032760">
    <property type="term" value="P:positive regulation of tumor necrosis factor production"/>
    <property type="evidence" value="ECO:0007669"/>
    <property type="project" value="Ensembl"/>
</dbReference>
<dbReference type="GO" id="GO:0002830">
    <property type="term" value="P:positive regulation of type 2 immune response"/>
    <property type="evidence" value="ECO:0007669"/>
    <property type="project" value="Ensembl"/>
</dbReference>
<dbReference type="GO" id="GO:0042981">
    <property type="term" value="P:regulation of apoptotic process"/>
    <property type="evidence" value="ECO:0007669"/>
    <property type="project" value="InterPro"/>
</dbReference>
<dbReference type="GO" id="GO:0032098">
    <property type="term" value="P:regulation of appetite"/>
    <property type="evidence" value="ECO:0000250"/>
    <property type="project" value="UniProtKB"/>
</dbReference>
<dbReference type="GO" id="GO:0050727">
    <property type="term" value="P:regulation of inflammatory response"/>
    <property type="evidence" value="ECO:0007669"/>
    <property type="project" value="Ensembl"/>
</dbReference>
<dbReference type="GO" id="GO:0032495">
    <property type="term" value="P:response to muramyl dipeptide"/>
    <property type="evidence" value="ECO:0000250"/>
    <property type="project" value="UniProtKB"/>
</dbReference>
<dbReference type="GO" id="GO:0001659">
    <property type="term" value="P:temperature homeostasis"/>
    <property type="evidence" value="ECO:0000250"/>
    <property type="project" value="UniProtKB"/>
</dbReference>
<dbReference type="CDD" id="cd08788">
    <property type="entry name" value="CARD_NOD2_2_CARD15"/>
    <property type="match status" value="1"/>
</dbReference>
<dbReference type="FunFam" id="3.80.10.10:FF:000239">
    <property type="entry name" value="Nucleotide-binding oligomerization domain-containing 2"/>
    <property type="match status" value="1"/>
</dbReference>
<dbReference type="FunFam" id="1.10.533.10:FF:000032">
    <property type="entry name" value="Nucleotide-binding oligomerization domain-containing protein 2"/>
    <property type="match status" value="1"/>
</dbReference>
<dbReference type="FunFam" id="1.10.533.10:FF:000045">
    <property type="entry name" value="Nucleotide-binding oligomerization domain-containing protein 2"/>
    <property type="match status" value="1"/>
</dbReference>
<dbReference type="FunFam" id="3.40.50.300:FF:000940">
    <property type="entry name" value="Nucleotide-binding oligomerization domain-containing protein 2"/>
    <property type="match status" value="1"/>
</dbReference>
<dbReference type="Gene3D" id="1.10.533.10">
    <property type="entry name" value="Death Domain, Fas"/>
    <property type="match status" value="2"/>
</dbReference>
<dbReference type="Gene3D" id="3.40.50.300">
    <property type="entry name" value="P-loop containing nucleotide triphosphate hydrolases"/>
    <property type="match status" value="1"/>
</dbReference>
<dbReference type="Gene3D" id="3.80.10.10">
    <property type="entry name" value="Ribonuclease Inhibitor"/>
    <property type="match status" value="1"/>
</dbReference>
<dbReference type="InterPro" id="IPR001315">
    <property type="entry name" value="CARD"/>
</dbReference>
<dbReference type="InterPro" id="IPR011029">
    <property type="entry name" value="DEATH-like_dom_sf"/>
</dbReference>
<dbReference type="InterPro" id="IPR001611">
    <property type="entry name" value="Leu-rich_rpt"/>
</dbReference>
<dbReference type="InterPro" id="IPR032675">
    <property type="entry name" value="LRR_dom_sf"/>
</dbReference>
<dbReference type="InterPro" id="IPR007111">
    <property type="entry name" value="NACHT_NTPase"/>
</dbReference>
<dbReference type="InterPro" id="IPR051261">
    <property type="entry name" value="NLR"/>
</dbReference>
<dbReference type="InterPro" id="IPR041267">
    <property type="entry name" value="NLRP_HD2"/>
</dbReference>
<dbReference type="InterPro" id="IPR041075">
    <property type="entry name" value="NOD1/2_WH"/>
</dbReference>
<dbReference type="InterPro" id="IPR027417">
    <property type="entry name" value="P-loop_NTPase"/>
</dbReference>
<dbReference type="PANTHER" id="PTHR24106">
    <property type="entry name" value="NACHT, LRR AND CARD DOMAINS-CONTAINING"/>
    <property type="match status" value="1"/>
</dbReference>
<dbReference type="Pfam" id="PF00619">
    <property type="entry name" value="CARD"/>
    <property type="match status" value="2"/>
</dbReference>
<dbReference type="Pfam" id="PF13516">
    <property type="entry name" value="LRR_6"/>
    <property type="match status" value="4"/>
</dbReference>
<dbReference type="Pfam" id="PF05729">
    <property type="entry name" value="NACHT"/>
    <property type="match status" value="1"/>
</dbReference>
<dbReference type="Pfam" id="PF17776">
    <property type="entry name" value="NLRC4_HD2"/>
    <property type="match status" value="1"/>
</dbReference>
<dbReference type="Pfam" id="PF17779">
    <property type="entry name" value="NOD2_WH"/>
    <property type="match status" value="1"/>
</dbReference>
<dbReference type="SMART" id="SM00368">
    <property type="entry name" value="LRR_RI"/>
    <property type="match status" value="9"/>
</dbReference>
<dbReference type="SUPFAM" id="SSF47986">
    <property type="entry name" value="DEATH domain"/>
    <property type="match status" value="2"/>
</dbReference>
<dbReference type="SUPFAM" id="SSF52540">
    <property type="entry name" value="P-loop containing nucleoside triphosphate hydrolases"/>
    <property type="match status" value="1"/>
</dbReference>
<dbReference type="SUPFAM" id="SSF52047">
    <property type="entry name" value="RNI-like"/>
    <property type="match status" value="1"/>
</dbReference>
<dbReference type="PROSITE" id="PS50209">
    <property type="entry name" value="CARD"/>
    <property type="match status" value="2"/>
</dbReference>
<dbReference type="PROSITE" id="PS51450">
    <property type="entry name" value="LRR"/>
    <property type="match status" value="1"/>
</dbReference>
<dbReference type="PROSITE" id="PS50837">
    <property type="entry name" value="NACHT"/>
    <property type="match status" value="1"/>
</dbReference>
<name>NOD2_RABIT</name>
<keyword id="KW-0002">3D-structure</keyword>
<keyword id="KW-1064">Adaptive immunity</keyword>
<keyword id="KW-0067">ATP-binding</keyword>
<keyword id="KW-0072">Autophagy</keyword>
<keyword id="KW-1003">Cell membrane</keyword>
<keyword id="KW-0963">Cytoplasm</keyword>
<keyword id="KW-0325">Glycoprotein</keyword>
<keyword id="KW-0391">Immunity</keyword>
<keyword id="KW-0399">Innate immunity</keyword>
<keyword id="KW-0433">Leucine-rich repeat</keyword>
<keyword id="KW-0449">Lipoprotein</keyword>
<keyword id="KW-0472">Membrane</keyword>
<keyword id="KW-0496">Mitochondrion</keyword>
<keyword id="KW-0547">Nucleotide-binding</keyword>
<keyword id="KW-0564">Palmitate</keyword>
<keyword id="KW-1185">Reference proteome</keyword>
<keyword id="KW-0677">Repeat</keyword>
<keyword id="KW-0832">Ubl conjugation</keyword>
<feature type="chain" id="PRO_0000458405" description="Nucleotide-binding oligomerization domain-containing protein 2">
    <location>
        <begin position="1"/>
        <end position="1013"/>
    </location>
</feature>
<feature type="domain" description="CARD 1" evidence="4">
    <location>
        <begin position="1"/>
        <end position="82"/>
    </location>
</feature>
<feature type="domain" description="CARD 2" evidence="4">
    <location>
        <begin position="107"/>
        <end position="178"/>
    </location>
</feature>
<feature type="domain" description="NACHT" evidence="5">
    <location>
        <begin position="266"/>
        <end position="402"/>
    </location>
</feature>
<feature type="repeat" description="LRR 1" evidence="3">
    <location>
        <begin position="764"/>
        <end position="785"/>
    </location>
</feature>
<feature type="repeat" description="LRR 2" evidence="3">
    <location>
        <begin position="789"/>
        <end position="812"/>
    </location>
</feature>
<feature type="repeat" description="LRR 3" evidence="3">
    <location>
        <begin position="817"/>
        <end position="838"/>
    </location>
</feature>
<feature type="repeat" description="LRR 4" evidence="3">
    <location>
        <begin position="845"/>
        <end position="857"/>
    </location>
</feature>
<feature type="repeat" description="LRR 5" evidence="3">
    <location>
        <begin position="873"/>
        <end position="893"/>
    </location>
</feature>
<feature type="repeat" description="LRR 6" evidence="3">
    <location>
        <begin position="901"/>
        <end position="922"/>
    </location>
</feature>
<feature type="repeat" description="LRR 7" evidence="3">
    <location>
        <begin position="929"/>
        <end position="949"/>
    </location>
</feature>
<feature type="repeat" description="LRR 8" evidence="3">
    <location>
        <begin position="957"/>
        <end position="978"/>
    </location>
</feature>
<feature type="repeat" description="LRR 9" evidence="3">
    <location>
        <begin position="985"/>
        <end position="1005"/>
    </location>
</feature>
<feature type="region of interest" description="Required for CARD9 binding" evidence="2">
    <location>
        <begin position="214"/>
        <end position="247"/>
    </location>
</feature>
<feature type="short sequence motif" description="ATG16L1-binding motif" evidence="2">
    <location>
        <begin position="36"/>
        <end position="50"/>
    </location>
</feature>
<feature type="binding site" evidence="6 11">
    <location>
        <position position="212"/>
    </location>
    <ligand>
        <name>ADP</name>
        <dbReference type="ChEBI" id="CHEBI:456216"/>
    </ligand>
</feature>
<feature type="binding site" evidence="6 10 11 12">
    <location>
        <position position="225"/>
    </location>
    <ligand>
        <name>ADP</name>
        <dbReference type="ChEBI" id="CHEBI:456216"/>
    </ligand>
</feature>
<feature type="binding site" evidence="6 10 11 12">
    <location>
        <position position="226"/>
    </location>
    <ligand>
        <name>ADP</name>
        <dbReference type="ChEBI" id="CHEBI:456216"/>
    </ligand>
</feature>
<feature type="binding site" evidence="5">
    <location>
        <begin position="272"/>
        <end position="279"/>
    </location>
    <ligand>
        <name>ATP</name>
        <dbReference type="ChEBI" id="CHEBI:30616"/>
    </ligand>
</feature>
<feature type="binding site" evidence="6 10 11 12">
    <location>
        <position position="275"/>
    </location>
    <ligand>
        <name>ADP</name>
        <dbReference type="ChEBI" id="CHEBI:456216"/>
    </ligand>
</feature>
<feature type="binding site" evidence="6 12">
    <location>
        <position position="276"/>
    </location>
    <ligand>
        <name>ADP</name>
        <dbReference type="ChEBI" id="CHEBI:456216"/>
    </ligand>
</feature>
<feature type="binding site" evidence="6 10 11 12">
    <location>
        <position position="277"/>
    </location>
    <ligand>
        <name>ADP</name>
        <dbReference type="ChEBI" id="CHEBI:456216"/>
    </ligand>
</feature>
<feature type="binding site" evidence="6 10 11 12">
    <location>
        <position position="278"/>
    </location>
    <ligand>
        <name>ADP</name>
        <dbReference type="ChEBI" id="CHEBI:456216"/>
    </ligand>
</feature>
<feature type="binding site" evidence="6 10 11 12">
    <location>
        <position position="279"/>
    </location>
    <ligand>
        <name>ADP</name>
        <dbReference type="ChEBI" id="CHEBI:456216"/>
    </ligand>
</feature>
<feature type="binding site" evidence="6 10 11 12">
    <location>
        <position position="280"/>
    </location>
    <ligand>
        <name>ADP</name>
        <dbReference type="ChEBI" id="CHEBI:456216"/>
    </ligand>
</feature>
<feature type="binding site" evidence="6 10 11 12">
    <location>
        <position position="576"/>
    </location>
    <ligand>
        <name>ADP</name>
        <dbReference type="ChEBI" id="CHEBI:456216"/>
    </ligand>
</feature>
<feature type="lipid moiety-binding region" description="S-palmitoyl cysteine" evidence="2">
    <location>
        <position position="368"/>
    </location>
</feature>
<feature type="helix" evidence="15">
    <location>
        <begin position="191"/>
        <end position="207"/>
    </location>
</feature>
<feature type="helix" evidence="15">
    <location>
        <begin position="221"/>
        <end position="224"/>
    </location>
</feature>
<feature type="strand" evidence="15">
    <location>
        <begin position="230"/>
        <end position="232"/>
    </location>
</feature>
<feature type="helix" evidence="15">
    <location>
        <begin position="251"/>
        <end position="253"/>
    </location>
</feature>
<feature type="strand" evidence="15">
    <location>
        <begin position="267"/>
        <end position="271"/>
    </location>
</feature>
<feature type="helix" evidence="15">
    <location>
        <begin position="278"/>
        <end position="290"/>
    </location>
</feature>
<feature type="strand" evidence="13">
    <location>
        <begin position="292"/>
        <end position="294"/>
    </location>
</feature>
<feature type="strand" evidence="15">
    <location>
        <begin position="299"/>
        <end position="305"/>
    </location>
</feature>
<feature type="helix" evidence="15">
    <location>
        <begin position="306"/>
        <end position="310"/>
    </location>
</feature>
<feature type="helix" evidence="15">
    <location>
        <begin position="318"/>
        <end position="324"/>
    </location>
</feature>
<feature type="helix" evidence="15">
    <location>
        <begin position="333"/>
        <end position="342"/>
    </location>
</feature>
<feature type="helix" evidence="15">
    <location>
        <begin position="344"/>
        <end position="346"/>
    </location>
</feature>
<feature type="strand" evidence="15">
    <location>
        <begin position="347"/>
        <end position="352"/>
    </location>
</feature>
<feature type="helix" evidence="15">
    <location>
        <begin position="354"/>
        <end position="356"/>
    </location>
</feature>
<feature type="turn" evidence="14">
    <location>
        <begin position="361"/>
        <end position="363"/>
    </location>
</feature>
<feature type="strand" evidence="15">
    <location>
        <begin position="370"/>
        <end position="372"/>
    </location>
</feature>
<feature type="helix" evidence="15">
    <location>
        <begin position="376"/>
        <end position="384"/>
    </location>
</feature>
<feature type="strand" evidence="15">
    <location>
        <begin position="387"/>
        <end position="389"/>
    </location>
</feature>
<feature type="strand" evidence="15">
    <location>
        <begin position="393"/>
        <end position="398"/>
    </location>
</feature>
<feature type="helix" evidence="14">
    <location>
        <begin position="400"/>
        <end position="402"/>
    </location>
</feature>
<feature type="helix" evidence="15">
    <location>
        <begin position="405"/>
        <end position="408"/>
    </location>
</feature>
<feature type="strand" evidence="15">
    <location>
        <begin position="411"/>
        <end position="417"/>
    </location>
</feature>
<feature type="helix" evidence="15">
    <location>
        <begin position="422"/>
        <end position="432"/>
    </location>
</feature>
<feature type="helix" evidence="15">
    <location>
        <begin position="438"/>
        <end position="448"/>
    </location>
</feature>
<feature type="helix" evidence="15">
    <location>
        <begin position="450"/>
        <end position="455"/>
    </location>
</feature>
<feature type="helix" evidence="15">
    <location>
        <begin position="459"/>
        <end position="467"/>
    </location>
</feature>
<feature type="helix" evidence="15">
    <location>
        <begin position="469"/>
        <end position="474"/>
    </location>
</feature>
<feature type="strand" evidence="15">
    <location>
        <begin position="475"/>
        <end position="477"/>
    </location>
</feature>
<feature type="helix" evidence="15">
    <location>
        <begin position="483"/>
        <end position="496"/>
    </location>
</feature>
<feature type="helix" evidence="15">
    <location>
        <begin position="512"/>
        <end position="515"/>
    </location>
</feature>
<feature type="helix" evidence="15">
    <location>
        <begin position="517"/>
        <end position="532"/>
    </location>
</feature>
<feature type="helix" evidence="15">
    <location>
        <begin position="540"/>
        <end position="545"/>
    </location>
</feature>
<feature type="helix" evidence="15">
    <location>
        <begin position="550"/>
        <end position="553"/>
    </location>
</feature>
<feature type="strand" evidence="15">
    <location>
        <begin position="556"/>
        <end position="559"/>
    </location>
</feature>
<feature type="strand" evidence="14">
    <location>
        <begin position="566"/>
        <end position="568"/>
    </location>
</feature>
<feature type="strand" evidence="15">
    <location>
        <begin position="572"/>
        <end position="576"/>
    </location>
</feature>
<feature type="helix" evidence="15">
    <location>
        <begin position="577"/>
        <end position="590"/>
    </location>
</feature>
<feature type="helix" evidence="15">
    <location>
        <begin position="596"/>
        <end position="602"/>
    </location>
</feature>
<feature type="helix" evidence="15">
    <location>
        <begin position="631"/>
        <end position="638"/>
    </location>
</feature>
<feature type="helix" evidence="15">
    <location>
        <begin position="641"/>
        <end position="654"/>
    </location>
</feature>
<feature type="helix" evidence="15">
    <location>
        <begin position="657"/>
        <end position="659"/>
    </location>
</feature>
<feature type="helix" evidence="15">
    <location>
        <begin position="660"/>
        <end position="664"/>
    </location>
</feature>
<feature type="helix" evidence="15">
    <location>
        <begin position="671"/>
        <end position="685"/>
    </location>
</feature>
<feature type="helix" evidence="15">
    <location>
        <begin position="687"/>
        <end position="693"/>
    </location>
</feature>
<feature type="helix" evidence="15">
    <location>
        <begin position="709"/>
        <end position="722"/>
    </location>
</feature>
<feature type="helix" evidence="15">
    <location>
        <begin position="725"/>
        <end position="732"/>
    </location>
</feature>
<feature type="strand" evidence="15">
    <location>
        <begin position="738"/>
        <end position="741"/>
    </location>
</feature>
<feature type="helix" evidence="15">
    <location>
        <begin position="749"/>
        <end position="759"/>
    </location>
</feature>
<feature type="strand" evidence="15">
    <location>
        <begin position="766"/>
        <end position="769"/>
    </location>
</feature>
<feature type="helix" evidence="15">
    <location>
        <begin position="776"/>
        <end position="783"/>
    </location>
</feature>
<feature type="helix" evidence="15">
    <location>
        <begin position="784"/>
        <end position="789"/>
    </location>
</feature>
<feature type="strand" evidence="15">
    <location>
        <begin position="790"/>
        <end position="794"/>
    </location>
</feature>
<feature type="helix" evidence="15">
    <location>
        <begin position="802"/>
        <end position="812"/>
    </location>
</feature>
<feature type="strand" evidence="15">
    <location>
        <begin position="820"/>
        <end position="822"/>
    </location>
</feature>
<feature type="strand" evidence="15">
    <location>
        <begin position="825"/>
        <end position="827"/>
    </location>
</feature>
<feature type="helix" evidence="15">
    <location>
        <begin position="830"/>
        <end position="832"/>
    </location>
</feature>
<feature type="helix" evidence="15">
    <location>
        <begin position="833"/>
        <end position="842"/>
    </location>
</feature>
<feature type="strand" evidence="15">
    <location>
        <begin position="848"/>
        <end position="850"/>
    </location>
</feature>
<feature type="strand" evidence="15">
    <location>
        <begin position="853"/>
        <end position="855"/>
    </location>
</feature>
<feature type="helix" evidence="15">
    <location>
        <begin position="858"/>
        <end position="869"/>
    </location>
</feature>
<feature type="strand" evidence="15">
    <location>
        <begin position="876"/>
        <end position="878"/>
    </location>
</feature>
<feature type="helix" evidence="15">
    <location>
        <begin position="885"/>
        <end position="896"/>
    </location>
</feature>
<feature type="strand" evidence="15">
    <location>
        <begin position="904"/>
        <end position="906"/>
    </location>
</feature>
<feature type="helix" evidence="15">
    <location>
        <begin position="914"/>
        <end position="926"/>
    </location>
</feature>
<feature type="strand" evidence="15">
    <location>
        <begin position="932"/>
        <end position="934"/>
    </location>
</feature>
<feature type="helix" evidence="15">
    <location>
        <begin position="941"/>
        <end position="953"/>
    </location>
</feature>
<feature type="strand" evidence="15">
    <location>
        <begin position="960"/>
        <end position="962"/>
    </location>
</feature>
<feature type="helix" evidence="15">
    <location>
        <begin position="970"/>
        <end position="982"/>
    </location>
</feature>
<feature type="strand" evidence="15">
    <location>
        <begin position="988"/>
        <end position="990"/>
    </location>
</feature>
<feature type="helix" evidence="15">
    <location>
        <begin position="998"/>
        <end position="1006"/>
    </location>
</feature>
<gene>
    <name evidence="7" type="primary">NOD2</name>
</gene>
<organism>
    <name type="scientific">Oryctolagus cuniculus</name>
    <name type="common">Rabbit</name>
    <dbReference type="NCBI Taxonomy" id="9986"/>
    <lineage>
        <taxon>Eukaryota</taxon>
        <taxon>Metazoa</taxon>
        <taxon>Chordata</taxon>
        <taxon>Craniata</taxon>
        <taxon>Vertebrata</taxon>
        <taxon>Euteleostomi</taxon>
        <taxon>Mammalia</taxon>
        <taxon>Eutheria</taxon>
        <taxon>Euarchontoglires</taxon>
        <taxon>Glires</taxon>
        <taxon>Lagomorpha</taxon>
        <taxon>Leporidae</taxon>
        <taxon>Oryctolagus</taxon>
    </lineage>
</organism>